<accession>P34722</accession>
<reference key="1">
    <citation type="journal article" date="1995" name="J. Mol. Biol.">
        <title>The tpa-1 gene of Caenorhabditis elegans encodes two proteins similar to Ca(2+)-independent protein kinase Cs: evidence by complete genomic and complementary DNA sequences of the tpa-1 gene.</title>
        <authorList>
            <person name="Sano T."/>
            <person name="Tabuse Y."/>
            <person name="Nishiwaki K."/>
            <person name="Miwa J."/>
        </authorList>
    </citation>
    <scope>NUCLEOTIDE SEQUENCE [GENOMIC DNA]</scope>
    <scope>ALTERNATIVE SPLICING</scope>
    <source>
        <strain>Bristol N2</strain>
    </source>
</reference>
<reference key="2">
    <citation type="journal article" date="1998" name="Science">
        <title>Genome sequence of the nematode C. elegans: a platform for investigating biology.</title>
        <authorList>
            <consortium name="The C. elegans sequencing consortium"/>
        </authorList>
    </citation>
    <scope>NUCLEOTIDE SEQUENCE [LARGE SCALE GENOMIC DNA]</scope>
    <source>
        <strain>Bristol N2</strain>
    </source>
</reference>
<reference key="3">
    <citation type="journal article" date="1989" name="Science">
        <title>Mutations in a protein kinase C homolog confer phorbol ester resistance on Caenorhabditis elegans.</title>
        <authorList>
            <person name="Tabuse Y."/>
            <person name="Nishiwaki K."/>
            <person name="Miwa J."/>
        </authorList>
    </citation>
    <scope>NUCLEOTIDE SEQUENCE [MRNA] OF 148-704</scope>
</reference>
<reference key="4">
    <citation type="submission" date="1993-03" db="EMBL/GenBank/DDBJ databases">
        <authorList>
            <person name="Miwa J."/>
        </authorList>
    </citation>
    <scope>SEQUENCE REVISION</scope>
</reference>
<reference key="5">
    <citation type="journal article" date="2007" name="Nat. Neurosci.">
        <title>Epidermal growth factor signaling induces behavioral quiescence in Caenorhabditis elegans.</title>
        <authorList>
            <person name="Van Buskirk C."/>
            <person name="Sternberg P.W."/>
        </authorList>
    </citation>
    <scope>FUNCTION</scope>
</reference>
<reference key="6">
    <citation type="journal article" date="2009" name="Cell Host Microbe">
        <title>Antifungal innate immunity in C. elegans: PKCdelta links G protein signaling and a conserved p38 MAPK cascade.</title>
        <authorList>
            <person name="Ziegler K."/>
            <person name="Kurz C.L."/>
            <person name="Cypowyj S."/>
            <person name="Couillault C."/>
            <person name="Pophillat M."/>
            <person name="Pujol N."/>
            <person name="Ewbank J.J."/>
        </authorList>
    </citation>
    <scope>FUNCTION</scope>
    <scope>DISRUPTION PHENOTYPE</scope>
    <scope>MUTAGENESIS OF PRO-544</scope>
</reference>
<reference key="7">
    <citation type="journal article" date="2012" name="Nat. Commun.">
        <title>Endocannabinoid-Goalpha signalling inhibits axon regeneration in Caenorhabditis elegans by antagonizing Gqalpha-PKC-JNK signalling.</title>
        <authorList>
            <person name="Pastuhov S.I."/>
            <person name="Fujiki K."/>
            <person name="Nix P."/>
            <person name="Kanao S."/>
            <person name="Bastiani M."/>
            <person name="Matsumoto K."/>
            <person name="Hisamoto N."/>
        </authorList>
    </citation>
    <scope>FUNCTION</scope>
    <scope>MUTAGENESIS OF LYS-404</scope>
</reference>
<reference key="8">
    <citation type="journal article" date="2012" name="PLoS ONE">
        <title>The pseudokinase NIPI-4 is a novel regulator of antimicrobial peptide gene expression.</title>
        <authorList>
            <person name="Labed S.A."/>
            <person name="Omi S."/>
            <person name="Gut M."/>
            <person name="Ewbank J.J."/>
            <person name="Pujol N."/>
        </authorList>
    </citation>
    <scope>FUNCTION</scope>
    <scope>MUTAGENESIS OF GLY-384</scope>
</reference>
<dbReference type="EC" id="2.7.11.13"/>
<dbReference type="EMBL" id="D49525">
    <property type="protein sequence ID" value="BAA08470.1"/>
    <property type="molecule type" value="Genomic_DNA"/>
</dbReference>
<dbReference type="EMBL" id="D49525">
    <property type="protein sequence ID" value="BAA08471.1"/>
    <property type="molecule type" value="Genomic_DNA"/>
</dbReference>
<dbReference type="EMBL" id="FO080226">
    <property type="protein sequence ID" value="CCD62171.1"/>
    <property type="molecule type" value="Genomic_DNA"/>
</dbReference>
<dbReference type="EMBL" id="FO080226">
    <property type="protein sequence ID" value="CCD62172.1"/>
    <property type="molecule type" value="Genomic_DNA"/>
</dbReference>
<dbReference type="EMBL" id="D14815">
    <property type="protein sequence ID" value="BAA03556.1"/>
    <property type="molecule type" value="mRNA"/>
</dbReference>
<dbReference type="PIR" id="S60117">
    <property type="entry name" value="S60117"/>
</dbReference>
<dbReference type="PIR" id="T33400">
    <property type="entry name" value="T33400"/>
</dbReference>
<dbReference type="RefSeq" id="NP_001359809.1">
    <molecule id="P34722-2"/>
    <property type="nucleotide sequence ID" value="NM_001372684.2"/>
</dbReference>
<dbReference type="RefSeq" id="NP_001379590.1">
    <molecule id="P34722-1"/>
    <property type="nucleotide sequence ID" value="NM_001392238.1"/>
</dbReference>
<dbReference type="RefSeq" id="NP_499860.1">
    <property type="nucleotide sequence ID" value="NM_067459.3"/>
</dbReference>
<dbReference type="RefSeq" id="NP_499861.1">
    <property type="nucleotide sequence ID" value="NM_067460.4"/>
</dbReference>
<dbReference type="SMR" id="P34722"/>
<dbReference type="BioGRID" id="41988">
    <property type="interactions" value="10"/>
</dbReference>
<dbReference type="FunCoup" id="P34722">
    <property type="interactions" value="620"/>
</dbReference>
<dbReference type="STRING" id="6239.B0545.1a.1"/>
<dbReference type="iPTMnet" id="P34722"/>
<dbReference type="PaxDb" id="6239-B0545.1a"/>
<dbReference type="PeptideAtlas" id="P34722"/>
<dbReference type="EnsemblMetazoa" id="B0545.1a.1">
    <molecule id="P34722-1"/>
    <property type="protein sequence ID" value="B0545.1a.1"/>
    <property type="gene ID" value="WBGene00006599"/>
</dbReference>
<dbReference type="EnsemblMetazoa" id="B0545.1b.1">
    <molecule id="P34722-2"/>
    <property type="protein sequence ID" value="B0545.1b.1"/>
    <property type="gene ID" value="WBGene00006599"/>
</dbReference>
<dbReference type="EnsemblMetazoa" id="B0545.1b.2">
    <molecule id="P34722-2"/>
    <property type="protein sequence ID" value="B0545.1b.2"/>
    <property type="gene ID" value="WBGene00006599"/>
</dbReference>
<dbReference type="EnsemblMetazoa" id="B0545.1b.3">
    <molecule id="P34722-2"/>
    <property type="protein sequence ID" value="B0545.1b.3"/>
    <property type="gene ID" value="WBGene00006599"/>
</dbReference>
<dbReference type="GeneID" id="176825"/>
<dbReference type="UCSC" id="B0545.1a">
    <molecule id="P34722-1"/>
    <property type="organism name" value="c. elegans"/>
</dbReference>
<dbReference type="AGR" id="WB:WBGene00006599"/>
<dbReference type="WormBase" id="B0545.1a">
    <molecule id="P34722-1"/>
    <property type="protein sequence ID" value="CE17353"/>
    <property type="gene ID" value="WBGene00006599"/>
    <property type="gene designation" value="tpa-1"/>
</dbReference>
<dbReference type="WormBase" id="B0545.1b">
    <molecule id="P34722-2"/>
    <property type="protein sequence ID" value="CE17354"/>
    <property type="gene ID" value="WBGene00006599"/>
    <property type="gene designation" value="tpa-1"/>
</dbReference>
<dbReference type="eggNOG" id="KOG0694">
    <property type="taxonomic scope" value="Eukaryota"/>
</dbReference>
<dbReference type="GeneTree" id="ENSGT00940000169708"/>
<dbReference type="InParanoid" id="P34722"/>
<dbReference type="OMA" id="MPDIGIY"/>
<dbReference type="OrthoDB" id="63267at2759"/>
<dbReference type="PhylomeDB" id="P34722"/>
<dbReference type="BRENDA" id="2.7.11.13">
    <property type="organism ID" value="1045"/>
</dbReference>
<dbReference type="Reactome" id="R-CEL-111465">
    <property type="pathway name" value="Apoptotic cleavage of cellular proteins"/>
</dbReference>
<dbReference type="Reactome" id="R-CEL-111933">
    <property type="pathway name" value="Calmodulin induced events"/>
</dbReference>
<dbReference type="Reactome" id="R-CEL-114508">
    <property type="pathway name" value="Effects of PIP2 hydrolysis"/>
</dbReference>
<dbReference type="Reactome" id="R-CEL-1489509">
    <property type="pathway name" value="DAG and IP3 signaling"/>
</dbReference>
<dbReference type="Reactome" id="R-CEL-202424">
    <property type="pathway name" value="Downstream TCR signaling"/>
</dbReference>
<dbReference type="Reactome" id="R-CEL-2029485">
    <property type="pathway name" value="Role of phospholipids in phagocytosis"/>
</dbReference>
<dbReference type="Reactome" id="R-CEL-2871837">
    <property type="pathway name" value="FCERI mediated NF-kB activation"/>
</dbReference>
<dbReference type="Reactome" id="R-CEL-373752">
    <property type="pathway name" value="Netrin-1 signaling"/>
</dbReference>
<dbReference type="Reactome" id="R-CEL-5218921">
    <property type="pathway name" value="VEGFR2 mediated cell proliferation"/>
</dbReference>
<dbReference type="Reactome" id="R-CEL-5607764">
    <property type="pathway name" value="CLEC7A (Dectin-1) signaling"/>
</dbReference>
<dbReference type="Reactome" id="R-CEL-6798695">
    <property type="pathway name" value="Neutrophil degranulation"/>
</dbReference>
<dbReference type="Reactome" id="R-CEL-9648002">
    <property type="pathway name" value="RAS processing"/>
</dbReference>
<dbReference type="PRO" id="PR:P34722"/>
<dbReference type="Proteomes" id="UP000001940">
    <property type="component" value="Chromosome IV"/>
</dbReference>
<dbReference type="Bgee" id="WBGene00006599">
    <property type="expression patterns" value="Expressed in pharyngeal muscle cell (C elegans) and 3 other cell types or tissues"/>
</dbReference>
<dbReference type="GO" id="GO:0005524">
    <property type="term" value="F:ATP binding"/>
    <property type="evidence" value="ECO:0007669"/>
    <property type="project" value="UniProtKB-KW"/>
</dbReference>
<dbReference type="GO" id="GO:0004697">
    <property type="term" value="F:diacylglycerol-dependent serine/threonine kinase activity"/>
    <property type="evidence" value="ECO:0007669"/>
    <property type="project" value="UniProtKB-EC"/>
</dbReference>
<dbReference type="GO" id="GO:0031435">
    <property type="term" value="F:mitogen-activated protein kinase kinase kinase binding"/>
    <property type="evidence" value="ECO:0000353"/>
    <property type="project" value="UniProtKB"/>
</dbReference>
<dbReference type="GO" id="GO:0106310">
    <property type="term" value="F:protein serine kinase activity"/>
    <property type="evidence" value="ECO:0007669"/>
    <property type="project" value="RHEA"/>
</dbReference>
<dbReference type="GO" id="GO:0004674">
    <property type="term" value="F:protein serine/threonine kinase activity"/>
    <property type="evidence" value="ECO:0000315"/>
    <property type="project" value="UniProtKB"/>
</dbReference>
<dbReference type="GO" id="GO:0008270">
    <property type="term" value="F:zinc ion binding"/>
    <property type="evidence" value="ECO:0007669"/>
    <property type="project" value="UniProtKB-KW"/>
</dbReference>
<dbReference type="GO" id="GO:0140367">
    <property type="term" value="P:antibacterial innate immune response"/>
    <property type="evidence" value="ECO:0000315"/>
    <property type="project" value="WormBase"/>
</dbReference>
<dbReference type="GO" id="GO:0050832">
    <property type="term" value="P:defense response to fungus"/>
    <property type="evidence" value="ECO:0000315"/>
    <property type="project" value="UniProtKB"/>
</dbReference>
<dbReference type="GO" id="GO:0035556">
    <property type="term" value="P:intracellular signal transduction"/>
    <property type="evidence" value="ECO:0000318"/>
    <property type="project" value="GO_Central"/>
</dbReference>
<dbReference type="GO" id="GO:0018105">
    <property type="term" value="P:peptidyl-serine phosphorylation"/>
    <property type="evidence" value="ECO:0000315"/>
    <property type="project" value="UniProtKB"/>
</dbReference>
<dbReference type="GO" id="GO:0002225">
    <property type="term" value="P:positive regulation of antimicrobial peptide production"/>
    <property type="evidence" value="ECO:0000315"/>
    <property type="project" value="WormBase"/>
</dbReference>
<dbReference type="GO" id="GO:0048680">
    <property type="term" value="P:positive regulation of axon regeneration"/>
    <property type="evidence" value="ECO:0000316"/>
    <property type="project" value="UniProtKB"/>
</dbReference>
<dbReference type="GO" id="GO:0010628">
    <property type="term" value="P:positive regulation of gene expression"/>
    <property type="evidence" value="ECO:0000315"/>
    <property type="project" value="UniProtKB"/>
</dbReference>
<dbReference type="GO" id="GO:0043410">
    <property type="term" value="P:positive regulation of MAPK cascade"/>
    <property type="evidence" value="ECO:0000315"/>
    <property type="project" value="UniProtKB"/>
</dbReference>
<dbReference type="GO" id="GO:0009611">
    <property type="term" value="P:response to wounding"/>
    <property type="evidence" value="ECO:0000315"/>
    <property type="project" value="WormBase"/>
</dbReference>
<dbReference type="CDD" id="cd20834">
    <property type="entry name" value="C1_nPKC_theta-like_rpt1"/>
    <property type="match status" value="1"/>
</dbReference>
<dbReference type="CDD" id="cd20837">
    <property type="entry name" value="C1_nPKC_theta-like_rpt2"/>
    <property type="match status" value="1"/>
</dbReference>
<dbReference type="CDD" id="cd05592">
    <property type="entry name" value="STKc_nPKC_theta_like"/>
    <property type="match status" value="1"/>
</dbReference>
<dbReference type="FunFam" id="1.10.510.10:FF:001541">
    <property type="entry name" value="Protein kinase C"/>
    <property type="match status" value="1"/>
</dbReference>
<dbReference type="FunFam" id="2.60.40.150:FF:000382">
    <property type="entry name" value="Protein kinase C"/>
    <property type="match status" value="1"/>
</dbReference>
<dbReference type="FunFam" id="3.30.60.20:FF:000003">
    <property type="entry name" value="Protein kinase C delta"/>
    <property type="match status" value="1"/>
</dbReference>
<dbReference type="FunFam" id="3.30.60.20:FF:000008">
    <property type="entry name" value="Protein kinase C theta"/>
    <property type="match status" value="1"/>
</dbReference>
<dbReference type="FunFam" id="3.30.200.20:FF:000020">
    <property type="entry name" value="Protein kinase C, alpha"/>
    <property type="match status" value="1"/>
</dbReference>
<dbReference type="Gene3D" id="3.30.60.20">
    <property type="match status" value="2"/>
</dbReference>
<dbReference type="Gene3D" id="2.60.40.150">
    <property type="entry name" value="C2 domain"/>
    <property type="match status" value="1"/>
</dbReference>
<dbReference type="Gene3D" id="3.30.200.20">
    <property type="entry name" value="Phosphorylase Kinase, domain 1"/>
    <property type="match status" value="1"/>
</dbReference>
<dbReference type="Gene3D" id="1.10.510.10">
    <property type="entry name" value="Transferase(Phosphotransferase) domain 1"/>
    <property type="match status" value="1"/>
</dbReference>
<dbReference type="InterPro" id="IPR000961">
    <property type="entry name" value="AGC-kinase_C"/>
</dbReference>
<dbReference type="InterPro" id="IPR046349">
    <property type="entry name" value="C1-like_sf"/>
</dbReference>
<dbReference type="InterPro" id="IPR035892">
    <property type="entry name" value="C2_domain_sf"/>
</dbReference>
<dbReference type="InterPro" id="IPR020454">
    <property type="entry name" value="DAG/PE-bd"/>
</dbReference>
<dbReference type="InterPro" id="IPR011009">
    <property type="entry name" value="Kinase-like_dom_sf"/>
</dbReference>
<dbReference type="InterPro" id="IPR002219">
    <property type="entry name" value="PE/DAG-bd"/>
</dbReference>
<dbReference type="InterPro" id="IPR017892">
    <property type="entry name" value="Pkinase_C"/>
</dbReference>
<dbReference type="InterPro" id="IPR014376">
    <property type="entry name" value="Prot_kin_PKC_delta"/>
</dbReference>
<dbReference type="InterPro" id="IPR000719">
    <property type="entry name" value="Prot_kinase_dom"/>
</dbReference>
<dbReference type="InterPro" id="IPR017441">
    <property type="entry name" value="Protein_kinase_ATP_BS"/>
</dbReference>
<dbReference type="InterPro" id="IPR008271">
    <property type="entry name" value="Ser/Thr_kinase_AS"/>
</dbReference>
<dbReference type="PANTHER" id="PTHR24351">
    <property type="entry name" value="RIBOSOMAL PROTEIN S6 KINASE"/>
    <property type="match status" value="1"/>
</dbReference>
<dbReference type="Pfam" id="PF00130">
    <property type="entry name" value="C1_1"/>
    <property type="match status" value="2"/>
</dbReference>
<dbReference type="Pfam" id="PF21494">
    <property type="entry name" value="PKC_C2"/>
    <property type="match status" value="1"/>
</dbReference>
<dbReference type="Pfam" id="PF00069">
    <property type="entry name" value="Pkinase"/>
    <property type="match status" value="1"/>
</dbReference>
<dbReference type="Pfam" id="PF00433">
    <property type="entry name" value="Pkinase_C"/>
    <property type="match status" value="1"/>
</dbReference>
<dbReference type="PIRSF" id="PIRSF000551">
    <property type="entry name" value="PKC_delta"/>
    <property type="match status" value="1"/>
</dbReference>
<dbReference type="PRINTS" id="PR00008">
    <property type="entry name" value="DAGPEDOMAIN"/>
</dbReference>
<dbReference type="SMART" id="SM00109">
    <property type="entry name" value="C1"/>
    <property type="match status" value="2"/>
</dbReference>
<dbReference type="SMART" id="SM00133">
    <property type="entry name" value="S_TK_X"/>
    <property type="match status" value="1"/>
</dbReference>
<dbReference type="SMART" id="SM00220">
    <property type="entry name" value="S_TKc"/>
    <property type="match status" value="1"/>
</dbReference>
<dbReference type="SUPFAM" id="SSF49562">
    <property type="entry name" value="C2 domain (Calcium/lipid-binding domain, CaLB)"/>
    <property type="match status" value="1"/>
</dbReference>
<dbReference type="SUPFAM" id="SSF57889">
    <property type="entry name" value="Cysteine-rich domain"/>
    <property type="match status" value="2"/>
</dbReference>
<dbReference type="SUPFAM" id="SSF56112">
    <property type="entry name" value="Protein kinase-like (PK-like)"/>
    <property type="match status" value="1"/>
</dbReference>
<dbReference type="PROSITE" id="PS51285">
    <property type="entry name" value="AGC_KINASE_CTER"/>
    <property type="match status" value="1"/>
</dbReference>
<dbReference type="PROSITE" id="PS00107">
    <property type="entry name" value="PROTEIN_KINASE_ATP"/>
    <property type="match status" value="1"/>
</dbReference>
<dbReference type="PROSITE" id="PS50011">
    <property type="entry name" value="PROTEIN_KINASE_DOM"/>
    <property type="match status" value="1"/>
</dbReference>
<dbReference type="PROSITE" id="PS00108">
    <property type="entry name" value="PROTEIN_KINASE_ST"/>
    <property type="match status" value="1"/>
</dbReference>
<dbReference type="PROSITE" id="PS00479">
    <property type="entry name" value="ZF_DAG_PE_1"/>
    <property type="match status" value="2"/>
</dbReference>
<dbReference type="PROSITE" id="PS50081">
    <property type="entry name" value="ZF_DAG_PE_2"/>
    <property type="match status" value="2"/>
</dbReference>
<evidence type="ECO:0000255" key="1"/>
<evidence type="ECO:0000255" key="2">
    <source>
        <dbReference type="PROSITE-ProRule" id="PRU00159"/>
    </source>
</evidence>
<evidence type="ECO:0000255" key="3">
    <source>
        <dbReference type="PROSITE-ProRule" id="PRU00226"/>
    </source>
</evidence>
<evidence type="ECO:0000255" key="4">
    <source>
        <dbReference type="PROSITE-ProRule" id="PRU00618"/>
    </source>
</evidence>
<evidence type="ECO:0000255" key="5">
    <source>
        <dbReference type="PROSITE-ProRule" id="PRU10027"/>
    </source>
</evidence>
<evidence type="ECO:0000269" key="6">
    <source>
    </source>
</evidence>
<evidence type="ECO:0000269" key="7">
    <source>
    </source>
</evidence>
<evidence type="ECO:0000269" key="8">
    <source>
    </source>
</evidence>
<evidence type="ECO:0000269" key="9">
    <source>
    </source>
</evidence>
<evidence type="ECO:0000305" key="10"/>
<name>KPC1_CAEEL</name>
<proteinExistence type="evidence at protein level"/>
<feature type="chain" id="PRO_0000055734" description="Protein kinase C-like 1">
    <location>
        <begin position="1"/>
        <end position="704"/>
    </location>
</feature>
<feature type="domain" description="Protein kinase" evidence="2">
    <location>
        <begin position="375"/>
        <end position="634"/>
    </location>
</feature>
<feature type="domain" description="AGC-kinase C-terminal" evidence="4">
    <location>
        <begin position="635"/>
        <end position="704"/>
    </location>
</feature>
<feature type="zinc finger region" description="Phorbol-ester/DAG-type 1" evidence="3">
    <location>
        <begin position="165"/>
        <end position="215"/>
    </location>
</feature>
<feature type="zinc finger region" description="Phorbol-ester/DAG-type 2" evidence="3">
    <location>
        <begin position="237"/>
        <end position="287"/>
    </location>
</feature>
<feature type="active site" description="Proton acceptor" evidence="2 5">
    <location>
        <position position="499"/>
    </location>
</feature>
<feature type="binding site" evidence="2">
    <location>
        <begin position="381"/>
        <end position="389"/>
    </location>
    <ligand>
        <name>ATP</name>
        <dbReference type="ChEBI" id="CHEBI:30616"/>
    </ligand>
</feature>
<feature type="binding site" evidence="2">
    <location>
        <position position="404"/>
    </location>
    <ligand>
        <name>ATP</name>
        <dbReference type="ChEBI" id="CHEBI:30616"/>
    </ligand>
</feature>
<feature type="modified residue" description="Phosphothreonine; by autocatalysis" evidence="1">
    <location>
        <position position="89"/>
    </location>
</feature>
<feature type="modified residue" description="Phosphothreonine; by autocatalysis" evidence="1">
    <location>
        <position position="139"/>
    </location>
</feature>
<feature type="modified residue" description="Phosphothreonine; by autocatalysis" evidence="1">
    <location>
        <position position="324"/>
    </location>
</feature>
<feature type="splice variant" id="VSP_004744" description="In isoform b." evidence="10">
    <location>
        <begin position="1"/>
        <end position="137"/>
    </location>
</feature>
<feature type="mutagenesis site" description="Severe loss of nlp-29 expression upon D.coniospora infection." evidence="8">
    <original>G</original>
    <variation>E</variation>
    <location>
        <position position="384"/>
    </location>
</feature>
<feature type="mutagenesis site" description="Probable loss of kinase activity. Loss of mlk-1 phosphorylation." evidence="9">
    <original>K</original>
    <variation>R</variation>
    <location>
        <position position="404"/>
    </location>
</feature>
<feature type="mutagenesis site" description="In k501; normal up-regulation of nlp-29 upon D.coniospora infection or physical injury." evidence="7">
    <original>P</original>
    <variation>S</variation>
    <location>
        <position position="544"/>
    </location>
</feature>
<protein>
    <recommendedName>
        <fullName>Protein kinase C-like 1</fullName>
        <shortName>PKC</shortName>
        <ecNumber>2.7.11.13</ecNumber>
    </recommendedName>
    <alternativeName>
        <fullName>Tetradecanoyl phorbol acetate-resistant protein 1</fullName>
    </alternativeName>
</protein>
<comment type="function">
    <text evidence="6 7 8 9 10">Diacylglycerol (DAG)-dependent serine/threonine-protein kinase that phosphorylates a range of cellular proteins (Probable). Phosphorylates mlk-1, a component of the JNK pathway. Involved in axon regeneration after injury probably by activating the JNK pathway (PubMed:23072806). Plays a role in resistance to fungal infection and in wound healing by promoting expression of antimicrobial peptide nlp-29 in the epidermis downstream of gpa-12 and plc-3 and upstream of tir-1-p38-like pathway (PubMed:19380113, PubMed:22470487). Probably by regulating neuronal transmission in ALA neurons, regulates the decrease in pharyngeal pumping during the quiescent state that precedes each larval molt, downstream of lin-3 and receptor let-23 and phospholipase plc-3 (PubMed:17891142).</text>
</comment>
<comment type="catalytic activity">
    <reaction>
        <text>L-seryl-[protein] + ATP = O-phospho-L-seryl-[protein] + ADP + H(+)</text>
        <dbReference type="Rhea" id="RHEA:17989"/>
        <dbReference type="Rhea" id="RHEA-COMP:9863"/>
        <dbReference type="Rhea" id="RHEA-COMP:11604"/>
        <dbReference type="ChEBI" id="CHEBI:15378"/>
        <dbReference type="ChEBI" id="CHEBI:29999"/>
        <dbReference type="ChEBI" id="CHEBI:30616"/>
        <dbReference type="ChEBI" id="CHEBI:83421"/>
        <dbReference type="ChEBI" id="CHEBI:456216"/>
        <dbReference type="EC" id="2.7.11.13"/>
    </reaction>
</comment>
<comment type="catalytic activity">
    <reaction>
        <text>L-threonyl-[protein] + ATP = O-phospho-L-threonyl-[protein] + ADP + H(+)</text>
        <dbReference type="Rhea" id="RHEA:46608"/>
        <dbReference type="Rhea" id="RHEA-COMP:11060"/>
        <dbReference type="Rhea" id="RHEA-COMP:11605"/>
        <dbReference type="ChEBI" id="CHEBI:15378"/>
        <dbReference type="ChEBI" id="CHEBI:30013"/>
        <dbReference type="ChEBI" id="CHEBI:30616"/>
        <dbReference type="ChEBI" id="CHEBI:61977"/>
        <dbReference type="ChEBI" id="CHEBI:456216"/>
        <dbReference type="EC" id="2.7.11.13"/>
    </reaction>
</comment>
<comment type="alternative products">
    <event type="alternative splicing"/>
    <isoform>
        <id>P34722-1</id>
        <name>a</name>
        <sequence type="displayed"/>
    </isoform>
    <isoform>
        <id>P34722-2</id>
        <name>b</name>
        <sequence type="described" ref="VSP_004744"/>
    </isoform>
</comment>
<comment type="disruption phenotype">
    <text evidence="7">Up-regulation of nlp-29 is severely impaired in the hyp7 and vulva epidermal cells following fungal infection by D.coniospora or physical injury.</text>
</comment>
<comment type="similarity">
    <text evidence="10">Belongs to the protein kinase superfamily. AGC Ser/Thr protein kinase family. PKC subfamily.</text>
</comment>
<sequence>MAQAENACRLKLLRADVPVDLLPAGCSATDLQPAVNVKEKIEVNGESRLVQKKKTLYPEWEKCWDTAVAEGRILQIVLMFNQTPVVEATMRLEDIISKCKSDAITHIWINTKPNGRILAQTRHLKNAPDDDHPVEDIMTSRSNSGPGIQRRRGAIKHARVHEIRGHQFVATFFRQPHFCSLCSDFMWGLNKQGYQCQLCSAAVHKKCHEKVIMQCPGSAKNTKETMALKERFKVDIPHRFKTYNFKSPTFCDHCGSMLYGLFKQGLRCEVCNVACHHKCERLMSNLCGVNQKQLSEMYHEIKRGTHATASCPPNIANLHLNGETSKNNGSLPNKLKNLFKSHQYSVEEQKETDEYMDNIWGGGDGPVKKFALPHFNLLKVLGKGSFGKVMLVELKGKNEFYAMKCLKKDVILEDDDTECTYIERRVLILASQCPFLCQLFCSFQTNEYLFFVMEYLNGGDLMHHIQQIKKFDEARTRFYACEIVVALQFLHTNNIIYRDLKLDNVLLDCDGHIKLADFGMAKTEMNRENGMASTFCGTPDYISPEIIKGQLYNEAVDFWSFGVLMYEMLVGQSPFHGEGEDELFDSILNERPYFPKTISKEAAKCLSALFDRNPNTRLGMPECPDGPIRQHCFFRGVDWKRFENRQVPPPFKPNIKSNSDASNFDDDFTNEKAALTPVHDKNLLASIDPEAFLNFSYTNPHFSK</sequence>
<gene>
    <name type="primary">tpa-1</name>
    <name type="ORF">B0545.1</name>
</gene>
<keyword id="KW-0025">Alternative splicing</keyword>
<keyword id="KW-0067">ATP-binding</keyword>
<keyword id="KW-0418">Kinase</keyword>
<keyword id="KW-0479">Metal-binding</keyword>
<keyword id="KW-0547">Nucleotide-binding</keyword>
<keyword id="KW-0597">Phosphoprotein</keyword>
<keyword id="KW-1185">Reference proteome</keyword>
<keyword id="KW-0677">Repeat</keyword>
<keyword id="KW-0723">Serine/threonine-protein kinase</keyword>
<keyword id="KW-0808">Transferase</keyword>
<keyword id="KW-0862">Zinc</keyword>
<keyword id="KW-0863">Zinc-finger</keyword>
<organism>
    <name type="scientific">Caenorhabditis elegans</name>
    <dbReference type="NCBI Taxonomy" id="6239"/>
    <lineage>
        <taxon>Eukaryota</taxon>
        <taxon>Metazoa</taxon>
        <taxon>Ecdysozoa</taxon>
        <taxon>Nematoda</taxon>
        <taxon>Chromadorea</taxon>
        <taxon>Rhabditida</taxon>
        <taxon>Rhabditina</taxon>
        <taxon>Rhabditomorpha</taxon>
        <taxon>Rhabditoidea</taxon>
        <taxon>Rhabditidae</taxon>
        <taxon>Peloderinae</taxon>
        <taxon>Caenorhabditis</taxon>
    </lineage>
</organism>